<name>CNTP1_MOUSE</name>
<protein>
    <recommendedName>
        <fullName>Contactin-associated protein 1</fullName>
        <shortName>Caspr</shortName>
        <shortName>Caspr1</shortName>
    </recommendedName>
    <alternativeName>
        <fullName>MHDNIV</fullName>
    </alternativeName>
    <alternativeName>
        <fullName>NCP1</fullName>
    </alternativeName>
    <alternativeName>
        <fullName>Neurexin IV</fullName>
    </alternativeName>
    <alternativeName>
        <fullName>Neurexin-4</fullName>
    </alternativeName>
    <alternativeName>
        <fullName>Paranodin</fullName>
    </alternativeName>
</protein>
<feature type="signal peptide" evidence="3">
    <location>
        <begin position="1"/>
        <end position="20"/>
    </location>
</feature>
<feature type="chain" id="PRO_0000019504" description="Contactin-associated protein 1">
    <location>
        <begin position="21"/>
        <end position="1385"/>
    </location>
</feature>
<feature type="topological domain" description="Extracellular" evidence="3">
    <location>
        <begin position="21"/>
        <end position="1284"/>
    </location>
</feature>
<feature type="transmembrane region" description="Helical" evidence="3">
    <location>
        <begin position="1285"/>
        <end position="1305"/>
    </location>
</feature>
<feature type="topological domain" description="Cytoplasmic" evidence="3">
    <location>
        <begin position="1306"/>
        <end position="1385"/>
    </location>
</feature>
<feature type="domain" description="F5/8 type C" evidence="5">
    <location>
        <begin position="26"/>
        <end position="169"/>
    </location>
</feature>
<feature type="domain" description="Laminin G-like 1" evidence="6">
    <location>
        <begin position="204"/>
        <end position="356"/>
    </location>
</feature>
<feature type="domain" description="Laminin G-like 2" evidence="6">
    <location>
        <begin position="390"/>
        <end position="539"/>
    </location>
</feature>
<feature type="domain" description="EGF-like 1" evidence="4">
    <location>
        <begin position="545"/>
        <end position="577"/>
    </location>
</feature>
<feature type="domain" description="Fibrinogen C-terminal" evidence="7">
    <location>
        <begin position="577"/>
        <end position="796"/>
    </location>
</feature>
<feature type="domain" description="Laminin G-like 3" evidence="6">
    <location>
        <begin position="814"/>
        <end position="958"/>
    </location>
</feature>
<feature type="domain" description="EGF-like 2" evidence="4">
    <location>
        <begin position="962"/>
        <end position="996"/>
    </location>
</feature>
<feature type="domain" description="Laminin G-like 4" evidence="6">
    <location>
        <begin position="1089"/>
        <end position="1251"/>
    </location>
</feature>
<feature type="region of interest" description="Disordered" evidence="8">
    <location>
        <begin position="1317"/>
        <end position="1385"/>
    </location>
</feature>
<feature type="short sequence motif" description="SH3-binding" evidence="3">
    <location>
        <begin position="1334"/>
        <end position="1370"/>
    </location>
</feature>
<feature type="compositionally biased region" description="Basic and acidic residues" evidence="8">
    <location>
        <begin position="1319"/>
        <end position="1329"/>
    </location>
</feature>
<feature type="compositionally biased region" description="Pro residues" evidence="8">
    <location>
        <begin position="1334"/>
        <end position="1367"/>
    </location>
</feature>
<feature type="modified residue" description="Phosphoserine" evidence="13">
    <location>
        <position position="1384"/>
    </location>
</feature>
<feature type="glycosylation site" description="N-linked (GlcNAc...) asparagine" evidence="3">
    <location>
        <position position="121"/>
    </location>
</feature>
<feature type="glycosylation site" description="N-linked (GlcNAc...) asparagine" evidence="3">
    <location>
        <position position="129"/>
    </location>
</feature>
<feature type="glycosylation site" description="N-linked (GlcNAc...) asparagine" evidence="3">
    <location>
        <position position="277"/>
    </location>
</feature>
<feature type="glycosylation site" description="N-linked (GlcNAc...) asparagine" evidence="3">
    <location>
        <position position="421"/>
    </location>
</feature>
<feature type="glycosylation site" description="N-linked (GlcNAc...) asparagine" evidence="3">
    <location>
        <position position="500"/>
    </location>
</feature>
<feature type="glycosylation site" description="N-linked (GlcNAc...) asparagine" evidence="3">
    <location>
        <position position="519"/>
    </location>
</feature>
<feature type="glycosylation site" description="N-linked (GlcNAc...) asparagine" evidence="3">
    <location>
        <position position="598"/>
    </location>
</feature>
<feature type="glycosylation site" description="N-linked (GlcNAc...) asparagine" evidence="3">
    <location>
        <position position="654"/>
    </location>
</feature>
<feature type="glycosylation site" description="N-linked (GlcNAc...) asparagine" evidence="3">
    <location>
        <position position="665"/>
    </location>
</feature>
<feature type="glycosylation site" description="N-linked (GlcNAc...) asparagine" evidence="3">
    <location>
        <position position="764"/>
    </location>
</feature>
<feature type="glycosylation site" description="N-linked (GlcNAc...) asparagine" evidence="3">
    <location>
        <position position="805"/>
    </location>
</feature>
<feature type="glycosylation site" description="N-linked (GlcNAc...) asparagine" evidence="3">
    <location>
        <position position="844"/>
    </location>
</feature>
<feature type="glycosylation site" description="N-linked (GlcNAc...) asparagine" evidence="3">
    <location>
        <position position="861"/>
    </location>
</feature>
<feature type="glycosylation site" description="N-linked (GlcNAc...) asparagine" evidence="3">
    <location>
        <position position="949"/>
    </location>
</feature>
<feature type="glycosylation site" description="N-linked (GlcNAc...) asparagine" evidence="3">
    <location>
        <position position="957"/>
    </location>
</feature>
<feature type="glycosylation site" description="N-linked (GlcNAc...) asparagine" evidence="3">
    <location>
        <position position="1079"/>
    </location>
</feature>
<feature type="glycosylation site" description="N-linked (GlcNAc...) asparagine" evidence="3">
    <location>
        <position position="1148"/>
    </location>
</feature>
<feature type="disulfide bond" evidence="1">
    <location>
        <begin position="26"/>
        <end position="169"/>
    </location>
</feature>
<feature type="disulfide bond" evidence="1">
    <location>
        <begin position="324"/>
        <end position="356"/>
    </location>
</feature>
<feature type="disulfide bond" evidence="1">
    <location>
        <begin position="507"/>
        <end position="539"/>
    </location>
</feature>
<feature type="disulfide bond" evidence="1">
    <location>
        <begin position="545"/>
        <end position="556"/>
    </location>
</feature>
<feature type="disulfide bond" evidence="1">
    <location>
        <begin position="550"/>
        <end position="565"/>
    </location>
</feature>
<feature type="disulfide bond" evidence="1">
    <location>
        <begin position="567"/>
        <end position="577"/>
    </location>
</feature>
<feature type="disulfide bond" evidence="1">
    <location>
        <begin position="931"/>
        <end position="958"/>
    </location>
</feature>
<feature type="disulfide bond" evidence="1">
    <location>
        <begin position="962"/>
        <end position="975"/>
    </location>
</feature>
<feature type="disulfide bond" evidence="1">
    <location>
        <begin position="969"/>
        <end position="984"/>
    </location>
</feature>
<feature type="disulfide bond" evidence="1">
    <location>
        <begin position="986"/>
        <end position="996"/>
    </location>
</feature>
<feature type="disulfide bond" evidence="1">
    <location>
        <begin position="1210"/>
        <end position="1251"/>
    </location>
</feature>
<feature type="sequence conflict" description="In Ref. 1; AAB96760." evidence="12" ref="1">
    <original>G</original>
    <variation>S</variation>
    <location>
        <position position="689"/>
    </location>
</feature>
<feature type="sequence conflict" description="In Ref. 1; AAB96760." evidence="12" ref="1">
    <original>LTT</original>
    <variation>VTR</variation>
    <location>
        <begin position="1134"/>
        <end position="1136"/>
    </location>
</feature>
<feature type="sequence conflict" description="In Ref. 1; AAB96760." evidence="12" ref="1">
    <original>P</original>
    <variation>Q</variation>
    <location>
        <position position="1262"/>
    </location>
</feature>
<feature type="sequence conflict" description="In Ref. 1; AAB96760." evidence="12" ref="1">
    <original>K</original>
    <variation>Q</variation>
    <location>
        <position position="1313"/>
    </location>
</feature>
<feature type="sequence conflict" description="In Ref. 1; AAB96760." evidence="12" ref="1">
    <original>D</original>
    <variation>H</variation>
    <location>
        <position position="1326"/>
    </location>
</feature>
<feature type="sequence conflict" description="In Ref. 1; AAB96760." evidence="12" ref="1">
    <original>P</original>
    <variation>S</variation>
    <location>
        <position position="1329"/>
    </location>
</feature>
<feature type="sequence conflict" description="In Ref. 1; AAB96760." evidence="12" ref="1">
    <original>T</original>
    <variation>I</variation>
    <location>
        <position position="1347"/>
    </location>
</feature>
<accession>O54991</accession>
<accession>A2A4K6</accession>
<reference key="1">
    <citation type="journal article" date="2001" name="Neuron">
        <title>Axon-glia interactions and the domain organization of myelinated axons requires neurexin IV/Caspr/Paranodin.</title>
        <authorList>
            <person name="Bhat M.A."/>
            <person name="Rios J.C."/>
            <person name="Lu Y."/>
            <person name="Garcia-Fresco G.P."/>
            <person name="Ching W."/>
            <person name="St Martin M."/>
            <person name="Li J."/>
            <person name="Einheber S."/>
            <person name="Chesler M."/>
            <person name="Rosenbluth J."/>
            <person name="Salzer J.L."/>
            <person name="Bellen H.J."/>
        </authorList>
    </citation>
    <scope>NUCLEOTIDE SEQUENCE [MRNA]</scope>
    <scope>POSSIBLE FUNCTION</scope>
    <scope>DISRUPTION PHENOTYPE</scope>
</reference>
<reference key="2">
    <citation type="journal article" date="2009" name="PLoS Biol.">
        <title>Lineage-specific biology revealed by a finished genome assembly of the mouse.</title>
        <authorList>
            <person name="Church D.M."/>
            <person name="Goodstadt L."/>
            <person name="Hillier L.W."/>
            <person name="Zody M.C."/>
            <person name="Goldstein S."/>
            <person name="She X."/>
            <person name="Bult C.J."/>
            <person name="Agarwala R."/>
            <person name="Cherry J.L."/>
            <person name="DiCuccio M."/>
            <person name="Hlavina W."/>
            <person name="Kapustin Y."/>
            <person name="Meric P."/>
            <person name="Maglott D."/>
            <person name="Birtle Z."/>
            <person name="Marques A.C."/>
            <person name="Graves T."/>
            <person name="Zhou S."/>
            <person name="Teague B."/>
            <person name="Potamousis K."/>
            <person name="Churas C."/>
            <person name="Place M."/>
            <person name="Herschleb J."/>
            <person name="Runnheim R."/>
            <person name="Forrest D."/>
            <person name="Amos-Landgraf J."/>
            <person name="Schwartz D.C."/>
            <person name="Cheng Z."/>
            <person name="Lindblad-Toh K."/>
            <person name="Eichler E.E."/>
            <person name="Ponting C.P."/>
        </authorList>
    </citation>
    <scope>NUCLEOTIDE SEQUENCE [LARGE SCALE GENOMIC DNA]</scope>
    <source>
        <strain>C57BL/6J</strain>
    </source>
</reference>
<reference key="3">
    <citation type="journal article" date="2001" name="Cell Tissue Res.">
        <title>Internodal specializations of myelinated axons in the central nervous system.</title>
        <authorList>
            <person name="Arroyo E.J."/>
            <person name="Xu T."/>
            <person name="Poliak S."/>
            <person name="Watson M."/>
            <person name="Peles E."/>
            <person name="Scherer S.S."/>
        </authorList>
    </citation>
    <scope>TISSUE SPECIFICITY</scope>
</reference>
<reference key="4">
    <citation type="journal article" date="2010" name="Cell">
        <title>A tissue-specific atlas of mouse protein phosphorylation and expression.</title>
        <authorList>
            <person name="Huttlin E.L."/>
            <person name="Jedrychowski M.P."/>
            <person name="Elias J.E."/>
            <person name="Goswami T."/>
            <person name="Rad R."/>
            <person name="Beausoleil S.A."/>
            <person name="Villen J."/>
            <person name="Haas W."/>
            <person name="Sowa M.E."/>
            <person name="Gygi S.P."/>
        </authorList>
    </citation>
    <scope>PHOSPHORYLATION [LARGE SCALE ANALYSIS] AT SER-1384</scope>
    <scope>IDENTIFICATION BY MASS SPECTROMETRY [LARGE SCALE ANALYSIS]</scope>
    <source>
        <tissue>Brain</tissue>
    </source>
</reference>
<reference key="5">
    <citation type="journal article" date="2014" name="J. Neurosci.">
        <title>Caspr and caspr2 are required for both radial and longitudinal organization of myelinated axons.</title>
        <authorList>
            <person name="Gordon A."/>
            <person name="Adamsky K."/>
            <person name="Vainshtein A."/>
            <person name="Frechter S."/>
            <person name="Dupree J.L."/>
            <person name="Rosenbluth J."/>
            <person name="Peles E."/>
        </authorList>
    </citation>
    <scope>SUBCELLULAR LOCATION</scope>
    <scope>TISSUE SPECIFICITY</scope>
    <scope>DISRUPTION PHENOTYPE</scope>
</reference>
<evidence type="ECO:0000250" key="1"/>
<evidence type="ECO:0000250" key="2">
    <source>
        <dbReference type="UniProtKB" id="P97846"/>
    </source>
</evidence>
<evidence type="ECO:0000255" key="3"/>
<evidence type="ECO:0000255" key="4">
    <source>
        <dbReference type="PROSITE-ProRule" id="PRU00076"/>
    </source>
</evidence>
<evidence type="ECO:0000255" key="5">
    <source>
        <dbReference type="PROSITE-ProRule" id="PRU00081"/>
    </source>
</evidence>
<evidence type="ECO:0000255" key="6">
    <source>
        <dbReference type="PROSITE-ProRule" id="PRU00122"/>
    </source>
</evidence>
<evidence type="ECO:0000255" key="7">
    <source>
        <dbReference type="PROSITE-ProRule" id="PRU00739"/>
    </source>
</evidence>
<evidence type="ECO:0000256" key="8">
    <source>
        <dbReference type="SAM" id="MobiDB-lite"/>
    </source>
</evidence>
<evidence type="ECO:0000269" key="9">
    <source>
    </source>
</evidence>
<evidence type="ECO:0000269" key="10">
    <source>
    </source>
</evidence>
<evidence type="ECO:0000269" key="11">
    <source>
    </source>
</evidence>
<evidence type="ECO:0000305" key="12"/>
<evidence type="ECO:0007744" key="13">
    <source>
    </source>
</evidence>
<gene>
    <name type="primary">Cntnap1</name>
    <name type="synonym">Nrxn4</name>
</gene>
<keyword id="KW-0130">Cell adhesion</keyword>
<keyword id="KW-0965">Cell junction</keyword>
<keyword id="KW-1015">Disulfide bond</keyword>
<keyword id="KW-0245">EGF-like domain</keyword>
<keyword id="KW-0325">Glycoprotein</keyword>
<keyword id="KW-0472">Membrane</keyword>
<keyword id="KW-0597">Phosphoprotein</keyword>
<keyword id="KW-1185">Reference proteome</keyword>
<keyword id="KW-0677">Repeat</keyword>
<keyword id="KW-0729">SH3-binding</keyword>
<keyword id="KW-0732">Signal</keyword>
<keyword id="KW-0812">Transmembrane</keyword>
<keyword id="KW-1133">Transmembrane helix</keyword>
<sequence>MMSLRLFSILLATVVSGAWGWGYYGCNEELVGPLYARSLGASSYYGLFTTARFARLHGISGWSPRIGDPNPWLQIDLMKKHRIRAVATQGAFNSWDWVTRYMLLYGDRVDSWTPFYQKGHNATFFGNVNDSAVVRHDLHYHFTARYIRIVPLAWNPRGKIGLRLGIYGCPYTSSILYFDGDDAISYRFQRGASQSLWDVFAFSFKTEEKDGLLLHTEGSQGDYVTLELQGAHLLLHMSLGSSPIQPRPGHTTVSLGGVLNDLSWHYVRVDRYGRDANFTLDGYAHHFVLNGDFERLNLENEIFIGGLVGAARKNLAYRHNFRGCIENVIYNRINIAEMAVMRHSRITFEGNVAFRCLDPVPHPINFGGPHNFVQVPGFPRRGRLAVSFRFRTWDLTGLLLFSHLGDGLGHVELMLSEGQVNVSIAQTGRKKLQFAAGYRLNDGFWHEVNFVAQENHAVISIDDVEGAEVRVSYPLLIRTGTSYFFGGCPKPASRWGCHSNQTAFHGCMELLKVDGQLVNLTLVEFRKLGYFAEVLFDTCGITDRCSPNMCEHDGRCYQSWDDFICYCELTGYKGVTCHEPLYKESCEAYRLSGKYSGNYTIDPDGSGPLKPFVVYCDIRENRAWTVVRHDRLWTTRVTGSSMDRPFLGAIQYWNASWEEVSALANASQHCEQWIEFSCYNSRLLNTAGGYPYSFWIGRNEEQHFYWGGSQPGIQRCACGLDQSCVDPALHCNCDADQPQWRTDKGLLTFVDHLPVTQVVVGDTNRSNSEAQFFLRPLRCYGDRNSWNTISFHTGAALRFPPIRANHSLDVSFYFRTSAPSGVFLENMGGPFCRWRRPYVRVELNTSRDVVFAFDIGNGDENLTVHSDDFEFNDDEWHLVRAEINVKQARLRVDHRPWVLRPMPLQTYIWLVYDQPLYVGSAELKRRPFVGCLRAMRLNGVTLNLEGRANASEGTFPNCTGHCTHPRFPCFHGGRCVERYSYYTCDCDLTAFDGPYCNHDIGGFFETGTWMRYNLQSALRSAAREFSHMLSRPVPGYEPGYVPGYDTPGYVPGYHGPGYRLPEYPRPGRPVPGYRGPVYNVTGEEVSFSFSTNSAPAVLLYVSSFVRDYMAVLIKEDGTLQLRYQLGTSPYVYQLTTRPVTDGQPHSVNITRVYRNLFIQVDYFPLTEQKFSLLVDSQLDSPKALYLGRVMETGVIDPEIQRYNTPGFSGCLSGVRFNNVAPLKTHFRTPRPMTAELAEAMRVQGELSESNCGAMPRLVSEVPPELDPWYLPPDFPYYHDDGWIAILLGFLVAFLLLGLVGMLVLFYLQNHRYKGSYHTNEPKATHDSHPGGKAPLPPSGPAQAPAPTPAPTQLPTPAPAPAPAPASGPGPRDQNLPQILEESRSE</sequence>
<proteinExistence type="evidence at protein level"/>
<comment type="function">
    <text evidence="9 11">Required, with CNTNAP2, for radial and longitudinal organization of myelinated axons (PubMed:25378149). Plays a role in the formation of functional distinct domains critical for saltatory conduction of nerve impulses in myelinated nerve fibers. Demarcates the paranodal region of the axo-glial junction. In association with contactin involved in the signaling between axons and myelinating glial cells (PubMed:11395000, PubMed:25378149).</text>
</comment>
<comment type="subunit">
    <text evidence="2">Interacts with CNTN1/contactin in cis form.</text>
</comment>
<comment type="subcellular location">
    <subcellularLocation>
        <location evidence="12">Membrane</location>
        <topology evidence="12">Single-pass type I membrane protein</topology>
    </subcellularLocation>
    <subcellularLocation>
        <location evidence="11">Cell junction</location>
        <location evidence="11">Paranodal septate junction</location>
    </subcellularLocation>
</comment>
<comment type="tissue specificity">
    <text evidence="10 11">Expressed in brain. In myelinated nerve fibers predominantly found in paranodal axoglial junctions. In the internodal region of myelinated axons in the CNS and the PNS also found as a thin line apposing the inner mesaxon of the myelin sheath. In PNS neurons this line forms a circumferential ring that apposes the innermost aspect of Schmidt-Lanterman incisures.</text>
</comment>
<comment type="disruption phenotype">
    <text evidence="9 11">Mutant mice exhibit tremor, ataxia, and significant motor paresis. Normal paranodal junctions fail to form, and the organization of the paranodal loops is disrupted. Contactin is undetectable in the paranodes, and potassium channels are displaced from the juxtaparanodal into the paranodal domains. Also results in a severe decrease in peripheral nerve conduction velocity (PubMed:11395000, PubMed:25378149). Double mutants CNTNAP1 and CNTNAP2 have wider Ranvier nodes compared to wild-type littermates (PubMed:25378149).</text>
</comment>
<comment type="similarity">
    <text evidence="12">Belongs to the neurexin family.</text>
</comment>
<dbReference type="EMBL" id="AF039833">
    <property type="protein sequence ID" value="AAB96760.1"/>
    <property type="molecule type" value="mRNA"/>
</dbReference>
<dbReference type="EMBL" id="AL590969">
    <property type="status" value="NOT_ANNOTATED_CDS"/>
    <property type="molecule type" value="Genomic_DNA"/>
</dbReference>
<dbReference type="CCDS" id="CCDS25455.1"/>
<dbReference type="PIR" id="T14158">
    <property type="entry name" value="T14158"/>
</dbReference>
<dbReference type="RefSeq" id="NP_058062.2">
    <property type="nucleotide sequence ID" value="NM_016782.2"/>
</dbReference>
<dbReference type="RefSeq" id="XP_030102010.1">
    <property type="nucleotide sequence ID" value="XM_030246150.1"/>
</dbReference>
<dbReference type="SMR" id="O54991"/>
<dbReference type="BioGRID" id="207284">
    <property type="interactions" value="18"/>
</dbReference>
<dbReference type="FunCoup" id="O54991">
    <property type="interactions" value="812"/>
</dbReference>
<dbReference type="IntAct" id="O54991">
    <property type="interactions" value="8"/>
</dbReference>
<dbReference type="MINT" id="O54991"/>
<dbReference type="STRING" id="10090.ENSMUSP00000099398"/>
<dbReference type="GlyConnect" id="2230">
    <property type="glycosylation" value="11 N-Linked glycans (10 sites)"/>
</dbReference>
<dbReference type="GlyCosmos" id="O54991">
    <property type="glycosylation" value="17 sites, 9 glycans"/>
</dbReference>
<dbReference type="GlyGen" id="O54991">
    <property type="glycosylation" value="19 sites, 18 N-linked glycans (13 sites), 1 O-linked glycan (1 site)"/>
</dbReference>
<dbReference type="iPTMnet" id="O54991"/>
<dbReference type="PhosphoSitePlus" id="O54991"/>
<dbReference type="SwissPalm" id="O54991"/>
<dbReference type="PaxDb" id="10090-ENSMUSP00000099398"/>
<dbReference type="PeptideAtlas" id="O54991"/>
<dbReference type="ProteomicsDB" id="283588"/>
<dbReference type="ABCD" id="O54991">
    <property type="antibodies" value="1 sequenced antibody"/>
</dbReference>
<dbReference type="Antibodypedia" id="2336">
    <property type="antibodies" value="232 antibodies from 35 providers"/>
</dbReference>
<dbReference type="DNASU" id="53321"/>
<dbReference type="Ensembl" id="ENSMUST00000103109.4">
    <property type="protein sequence ID" value="ENSMUSP00000099398.4"/>
    <property type="gene ID" value="ENSMUSG00000017167.7"/>
</dbReference>
<dbReference type="GeneID" id="53321"/>
<dbReference type="KEGG" id="mmu:53321"/>
<dbReference type="UCSC" id="uc007lnt.1">
    <property type="organism name" value="mouse"/>
</dbReference>
<dbReference type="AGR" id="MGI:1858201"/>
<dbReference type="CTD" id="8506"/>
<dbReference type="MGI" id="MGI:1858201">
    <property type="gene designation" value="Cntnap1"/>
</dbReference>
<dbReference type="VEuPathDB" id="HostDB:ENSMUSG00000017167"/>
<dbReference type="eggNOG" id="KOG3516">
    <property type="taxonomic scope" value="Eukaryota"/>
</dbReference>
<dbReference type="GeneTree" id="ENSGT00940000160825"/>
<dbReference type="HOGENOM" id="CLU_003504_1_0_1"/>
<dbReference type="InParanoid" id="O54991"/>
<dbReference type="OMA" id="RSGCHSN"/>
<dbReference type="OrthoDB" id="26719at2759"/>
<dbReference type="PhylomeDB" id="O54991"/>
<dbReference type="TreeFam" id="TF321823"/>
<dbReference type="BioGRID-ORCS" id="53321">
    <property type="hits" value="3 hits in 77 CRISPR screens"/>
</dbReference>
<dbReference type="CD-CODE" id="CE726F99">
    <property type="entry name" value="Postsynaptic density"/>
</dbReference>
<dbReference type="PRO" id="PR:O54991"/>
<dbReference type="Proteomes" id="UP000000589">
    <property type="component" value="Chromosome 11"/>
</dbReference>
<dbReference type="RNAct" id="O54991">
    <property type="molecule type" value="protein"/>
</dbReference>
<dbReference type="Bgee" id="ENSMUSG00000017167">
    <property type="expression patterns" value="Expressed in superior frontal gyrus and 73 other cell types or tissues"/>
</dbReference>
<dbReference type="GO" id="GO:0098978">
    <property type="term" value="C:glutamatergic synapse"/>
    <property type="evidence" value="ECO:0000314"/>
    <property type="project" value="SynGO"/>
</dbReference>
<dbReference type="GO" id="GO:0043209">
    <property type="term" value="C:myelin sheath"/>
    <property type="evidence" value="ECO:0007005"/>
    <property type="project" value="UniProtKB"/>
</dbReference>
<dbReference type="GO" id="GO:0033010">
    <property type="term" value="C:paranodal junction"/>
    <property type="evidence" value="ECO:0007669"/>
    <property type="project" value="UniProtKB-SubCell"/>
</dbReference>
<dbReference type="GO" id="GO:0033270">
    <property type="term" value="C:paranode region of axon"/>
    <property type="evidence" value="ECO:0000314"/>
    <property type="project" value="UniProtKB"/>
</dbReference>
<dbReference type="GO" id="GO:0005886">
    <property type="term" value="C:plasma membrane"/>
    <property type="evidence" value="ECO:0000304"/>
    <property type="project" value="Reactome"/>
</dbReference>
<dbReference type="GO" id="GO:0005918">
    <property type="term" value="C:septate junction"/>
    <property type="evidence" value="ECO:0000314"/>
    <property type="project" value="MGI"/>
</dbReference>
<dbReference type="GO" id="GO:0017124">
    <property type="term" value="F:SH3 domain binding"/>
    <property type="evidence" value="ECO:0000250"/>
    <property type="project" value="BHF-UCL"/>
</dbReference>
<dbReference type="GO" id="GO:0007409">
    <property type="term" value="P:axonogenesis"/>
    <property type="evidence" value="ECO:0000315"/>
    <property type="project" value="MGI"/>
</dbReference>
<dbReference type="GO" id="GO:0007155">
    <property type="term" value="P:cell adhesion"/>
    <property type="evidence" value="ECO:0007669"/>
    <property type="project" value="UniProtKB-KW"/>
</dbReference>
<dbReference type="GO" id="GO:0022010">
    <property type="term" value="P:central nervous system myelination"/>
    <property type="evidence" value="ECO:0000250"/>
    <property type="project" value="UniProtKB"/>
</dbReference>
<dbReference type="GO" id="GO:0007010">
    <property type="term" value="P:cytoskeleton organization"/>
    <property type="evidence" value="ECO:0000315"/>
    <property type="project" value="BHF-UCL"/>
</dbReference>
<dbReference type="GO" id="GO:0007005">
    <property type="term" value="P:mitochondrion organization"/>
    <property type="evidence" value="ECO:0000315"/>
    <property type="project" value="MGI"/>
</dbReference>
<dbReference type="GO" id="GO:0042552">
    <property type="term" value="P:myelination"/>
    <property type="evidence" value="ECO:0000316"/>
    <property type="project" value="MGI"/>
</dbReference>
<dbReference type="GO" id="GO:0022011">
    <property type="term" value="P:myelination in peripheral nervous system"/>
    <property type="evidence" value="ECO:0000250"/>
    <property type="project" value="UniProtKB"/>
</dbReference>
<dbReference type="GO" id="GO:0098529">
    <property type="term" value="P:neuromuscular junction development, skeletal muscle fiber"/>
    <property type="evidence" value="ECO:0000315"/>
    <property type="project" value="MGI"/>
</dbReference>
<dbReference type="GO" id="GO:0050905">
    <property type="term" value="P:neuromuscular process"/>
    <property type="evidence" value="ECO:0000315"/>
    <property type="project" value="MGI"/>
</dbReference>
<dbReference type="GO" id="GO:0050885">
    <property type="term" value="P:neuromuscular process controlling balance"/>
    <property type="evidence" value="ECO:0000315"/>
    <property type="project" value="BHF-UCL"/>
</dbReference>
<dbReference type="GO" id="GO:0050884">
    <property type="term" value="P:neuromuscular process controlling posture"/>
    <property type="evidence" value="ECO:0000315"/>
    <property type="project" value="BHF-UCL"/>
</dbReference>
<dbReference type="GO" id="GO:0031175">
    <property type="term" value="P:neuron projection development"/>
    <property type="evidence" value="ECO:0000316"/>
    <property type="project" value="MGI"/>
</dbReference>
<dbReference type="GO" id="GO:0048812">
    <property type="term" value="P:neuron projection morphogenesis"/>
    <property type="evidence" value="ECO:0000315"/>
    <property type="project" value="UniProtKB"/>
</dbReference>
<dbReference type="GO" id="GO:0019227">
    <property type="term" value="P:neuronal action potential propagation"/>
    <property type="evidence" value="ECO:0000315"/>
    <property type="project" value="BHF-UCL"/>
</dbReference>
<dbReference type="GO" id="GO:0030913">
    <property type="term" value="P:paranodal junction assembly"/>
    <property type="evidence" value="ECO:0000315"/>
    <property type="project" value="BHF-UCL"/>
</dbReference>
<dbReference type="GO" id="GO:1990227">
    <property type="term" value="P:paranodal junction maintenance"/>
    <property type="evidence" value="ECO:0000315"/>
    <property type="project" value="MGI"/>
</dbReference>
<dbReference type="GO" id="GO:0097106">
    <property type="term" value="P:postsynaptic density organization"/>
    <property type="evidence" value="ECO:0000315"/>
    <property type="project" value="MGI"/>
</dbReference>
<dbReference type="GO" id="GO:0071205">
    <property type="term" value="P:protein localization to juxtaparanode region of axon"/>
    <property type="evidence" value="ECO:0000315"/>
    <property type="project" value="UniProtKB"/>
</dbReference>
<dbReference type="GO" id="GO:0002175">
    <property type="term" value="P:protein localization to paranode region of axon"/>
    <property type="evidence" value="ECO:0000315"/>
    <property type="project" value="BHF-UCL"/>
</dbReference>
<dbReference type="GO" id="GO:0090128">
    <property type="term" value="P:regulation of synapse maturation"/>
    <property type="evidence" value="ECO:0000314"/>
    <property type="project" value="SynGO"/>
</dbReference>
<dbReference type="CDD" id="cd00054">
    <property type="entry name" value="EGF_CA"/>
    <property type="match status" value="1"/>
</dbReference>
<dbReference type="CDD" id="cd00057">
    <property type="entry name" value="FA58C"/>
    <property type="match status" value="1"/>
</dbReference>
<dbReference type="CDD" id="cd00110">
    <property type="entry name" value="LamG"/>
    <property type="match status" value="4"/>
</dbReference>
<dbReference type="FunFam" id="2.60.120.200:FF:000082">
    <property type="entry name" value="Contactin associated protein 1"/>
    <property type="match status" value="1"/>
</dbReference>
<dbReference type="FunFam" id="2.60.120.200:FF:000099">
    <property type="entry name" value="Contactin associated protein 1"/>
    <property type="match status" value="1"/>
</dbReference>
<dbReference type="FunFam" id="2.60.120.1000:FF:000005">
    <property type="entry name" value="Contactin associated protein-like 2"/>
    <property type="match status" value="1"/>
</dbReference>
<dbReference type="FunFam" id="2.60.120.260:FF:000016">
    <property type="entry name" value="Contactin-associated protein-like 4 isoform 1"/>
    <property type="match status" value="1"/>
</dbReference>
<dbReference type="FunFam" id="2.60.120.200:FF:000026">
    <property type="entry name" value="contactin-associated protein-like 4 isoform X1"/>
    <property type="match status" value="1"/>
</dbReference>
<dbReference type="FunFam" id="2.10.25.10:FF:000015">
    <property type="entry name" value="neurexin-1 isoform X1"/>
    <property type="match status" value="2"/>
</dbReference>
<dbReference type="Gene3D" id="2.60.120.1000">
    <property type="match status" value="1"/>
</dbReference>
<dbReference type="Gene3D" id="2.60.120.200">
    <property type="match status" value="4"/>
</dbReference>
<dbReference type="Gene3D" id="2.60.120.260">
    <property type="entry name" value="Galactose-binding domain-like"/>
    <property type="match status" value="1"/>
</dbReference>
<dbReference type="Gene3D" id="2.10.25.10">
    <property type="entry name" value="Laminin"/>
    <property type="match status" value="2"/>
</dbReference>
<dbReference type="InterPro" id="IPR013320">
    <property type="entry name" value="ConA-like_dom_sf"/>
</dbReference>
<dbReference type="InterPro" id="IPR000742">
    <property type="entry name" value="EGF-like_dom"/>
</dbReference>
<dbReference type="InterPro" id="IPR000421">
    <property type="entry name" value="FA58C"/>
</dbReference>
<dbReference type="InterPro" id="IPR036056">
    <property type="entry name" value="Fibrinogen-like_C"/>
</dbReference>
<dbReference type="InterPro" id="IPR002181">
    <property type="entry name" value="Fibrinogen_a/b/g_C_dom"/>
</dbReference>
<dbReference type="InterPro" id="IPR008979">
    <property type="entry name" value="Galactose-bd-like_sf"/>
</dbReference>
<dbReference type="InterPro" id="IPR001791">
    <property type="entry name" value="Laminin_G"/>
</dbReference>
<dbReference type="InterPro" id="IPR003585">
    <property type="entry name" value="Neurexin-like"/>
</dbReference>
<dbReference type="InterPro" id="IPR050372">
    <property type="entry name" value="Neurexin-related_CASP"/>
</dbReference>
<dbReference type="PANTHER" id="PTHR15036:SF43">
    <property type="entry name" value="CONTACTIN-ASSOCIATED PROTEIN 1"/>
    <property type="match status" value="1"/>
</dbReference>
<dbReference type="PANTHER" id="PTHR15036">
    <property type="entry name" value="PIKACHURIN-LIKE PROTEIN"/>
    <property type="match status" value="1"/>
</dbReference>
<dbReference type="Pfam" id="PF00754">
    <property type="entry name" value="F5_F8_type_C"/>
    <property type="match status" value="1"/>
</dbReference>
<dbReference type="Pfam" id="PF02210">
    <property type="entry name" value="Laminin_G_2"/>
    <property type="match status" value="4"/>
</dbReference>
<dbReference type="SMART" id="SM00294">
    <property type="entry name" value="4.1m"/>
    <property type="match status" value="1"/>
</dbReference>
<dbReference type="SMART" id="SM00231">
    <property type="entry name" value="FA58C"/>
    <property type="match status" value="1"/>
</dbReference>
<dbReference type="SMART" id="SM00282">
    <property type="entry name" value="LamG"/>
    <property type="match status" value="4"/>
</dbReference>
<dbReference type="SUPFAM" id="SSF49899">
    <property type="entry name" value="Concanavalin A-like lectins/glucanases"/>
    <property type="match status" value="4"/>
</dbReference>
<dbReference type="SUPFAM" id="SSF57196">
    <property type="entry name" value="EGF/Laminin"/>
    <property type="match status" value="1"/>
</dbReference>
<dbReference type="SUPFAM" id="SSF56496">
    <property type="entry name" value="Fibrinogen C-terminal domain-like"/>
    <property type="match status" value="1"/>
</dbReference>
<dbReference type="SUPFAM" id="SSF49785">
    <property type="entry name" value="Galactose-binding domain-like"/>
    <property type="match status" value="1"/>
</dbReference>
<dbReference type="PROSITE" id="PS50026">
    <property type="entry name" value="EGF_3"/>
    <property type="match status" value="2"/>
</dbReference>
<dbReference type="PROSITE" id="PS01285">
    <property type="entry name" value="FA58C_1"/>
    <property type="match status" value="1"/>
</dbReference>
<dbReference type="PROSITE" id="PS01286">
    <property type="entry name" value="FA58C_2"/>
    <property type="match status" value="1"/>
</dbReference>
<dbReference type="PROSITE" id="PS50022">
    <property type="entry name" value="FA58C_3"/>
    <property type="match status" value="1"/>
</dbReference>
<dbReference type="PROSITE" id="PS51406">
    <property type="entry name" value="FIBRINOGEN_C_2"/>
    <property type="match status" value="1"/>
</dbReference>
<dbReference type="PROSITE" id="PS50025">
    <property type="entry name" value="LAM_G_DOMAIN"/>
    <property type="match status" value="4"/>
</dbReference>
<organism>
    <name type="scientific">Mus musculus</name>
    <name type="common">Mouse</name>
    <dbReference type="NCBI Taxonomy" id="10090"/>
    <lineage>
        <taxon>Eukaryota</taxon>
        <taxon>Metazoa</taxon>
        <taxon>Chordata</taxon>
        <taxon>Craniata</taxon>
        <taxon>Vertebrata</taxon>
        <taxon>Euteleostomi</taxon>
        <taxon>Mammalia</taxon>
        <taxon>Eutheria</taxon>
        <taxon>Euarchontoglires</taxon>
        <taxon>Glires</taxon>
        <taxon>Rodentia</taxon>
        <taxon>Myomorpha</taxon>
        <taxon>Muroidea</taxon>
        <taxon>Muridae</taxon>
        <taxon>Murinae</taxon>
        <taxon>Mus</taxon>
        <taxon>Mus</taxon>
    </lineage>
</organism>